<protein>
    <recommendedName>
        <fullName>Xyloglucan-specific endo-beta-1,4-glucanase BoGH5A</fullName>
        <ecNumber>3.2.1.151</ecNumber>
    </recommendedName>
    <alternativeName>
        <fullName>Glycosyl hydrolase family protein 5A</fullName>
        <shortName>BoGH5A</shortName>
    </alternativeName>
</protein>
<keyword id="KW-0002">3D-structure</keyword>
<keyword id="KW-0119">Carbohydrate metabolism</keyword>
<keyword id="KW-0998">Cell outer membrane</keyword>
<keyword id="KW-0326">Glycosidase</keyword>
<keyword id="KW-0378">Hydrolase</keyword>
<keyword id="KW-0449">Lipoprotein</keyword>
<keyword id="KW-0472">Membrane</keyword>
<keyword id="KW-0564">Palmitate</keyword>
<keyword id="KW-0624">Polysaccharide degradation</keyword>
<keyword id="KW-0732">Signal</keyword>
<evidence type="ECO:0000250" key="1"/>
<evidence type="ECO:0000255" key="2">
    <source>
        <dbReference type="PROSITE-ProRule" id="PRU00303"/>
    </source>
</evidence>
<evidence type="ECO:0000269" key="3">
    <source>
    </source>
</evidence>
<evidence type="ECO:0000305" key="4"/>
<evidence type="ECO:0000305" key="5">
    <source>
    </source>
</evidence>
<evidence type="ECO:0007829" key="6">
    <source>
        <dbReference type="PDB" id="3ZMR"/>
    </source>
</evidence>
<feature type="signal peptide" evidence="2">
    <location>
        <begin position="1"/>
        <end position="32"/>
    </location>
</feature>
<feature type="chain" id="PRO_0000425894" description="Xyloglucan-specific endo-beta-1,4-glucanase BoGH5A">
    <location>
        <begin position="33"/>
        <end position="502"/>
    </location>
</feature>
<feature type="domain" description="BACON">
    <location>
        <begin position="67"/>
        <end position="127"/>
    </location>
</feature>
<feature type="active site" description="Proton donor" evidence="1">
    <location>
        <position position="297"/>
    </location>
</feature>
<feature type="active site" description="Nucleophile" evidence="5">
    <location>
        <position position="430"/>
    </location>
</feature>
<feature type="binding site">
    <location>
        <position position="165"/>
    </location>
    <ligand>
        <name>substrate</name>
    </ligand>
</feature>
<feature type="binding site">
    <location>
        <position position="172"/>
    </location>
    <ligand>
        <name>substrate</name>
    </ligand>
</feature>
<feature type="binding site">
    <location>
        <position position="251"/>
    </location>
    <ligand>
        <name>substrate</name>
    </ligand>
</feature>
<feature type="binding site">
    <location>
        <position position="296"/>
    </location>
    <ligand>
        <name>substrate</name>
    </ligand>
</feature>
<feature type="binding site">
    <location>
        <position position="472"/>
    </location>
    <ligand>
        <name>substrate</name>
    </ligand>
</feature>
<feature type="lipid moiety-binding region" description="N-palmitoyl cysteine" evidence="5">
    <location>
        <position position="33"/>
    </location>
</feature>
<feature type="lipid moiety-binding region" description="S-diacylglycerol cysteine" evidence="4">
    <location>
        <position position="33"/>
    </location>
</feature>
<feature type="mutagenesis site" description="Abolishes surface localization and hampers growth on xyloglucans." evidence="3">
    <original>C</original>
    <variation>A</variation>
    <location>
        <position position="33"/>
    </location>
</feature>
<feature type="mutagenesis site" description="Loss of activity." evidence="3">
    <original>E</original>
    <variation>A</variation>
    <location>
        <position position="430"/>
    </location>
</feature>
<feature type="helix" evidence="6">
    <location>
        <begin position="47"/>
        <end position="49"/>
    </location>
</feature>
<feature type="strand" evidence="6">
    <location>
        <begin position="50"/>
        <end position="54"/>
    </location>
</feature>
<feature type="strand" evidence="6">
    <location>
        <begin position="59"/>
        <end position="66"/>
    </location>
</feature>
<feature type="strand" evidence="6">
    <location>
        <begin position="71"/>
        <end position="77"/>
    </location>
</feature>
<feature type="strand" evidence="6">
    <location>
        <begin position="80"/>
        <end position="83"/>
    </location>
</feature>
<feature type="strand" evidence="6">
    <location>
        <begin position="85"/>
        <end position="87"/>
    </location>
</feature>
<feature type="strand" evidence="6">
    <location>
        <begin position="89"/>
        <end position="97"/>
    </location>
</feature>
<feature type="strand" evidence="6">
    <location>
        <begin position="102"/>
        <end position="104"/>
    </location>
</feature>
<feature type="strand" evidence="6">
    <location>
        <begin position="106"/>
        <end position="113"/>
    </location>
</feature>
<feature type="strand" evidence="6">
    <location>
        <begin position="120"/>
        <end position="126"/>
    </location>
</feature>
<feature type="helix" evidence="6">
    <location>
        <begin position="150"/>
        <end position="157"/>
    </location>
</feature>
<feature type="strand" evidence="6">
    <location>
        <begin position="160"/>
        <end position="162"/>
    </location>
</feature>
<feature type="turn" evidence="6">
    <location>
        <begin position="182"/>
        <end position="185"/>
    </location>
</feature>
<feature type="helix" evidence="6">
    <location>
        <begin position="192"/>
        <end position="200"/>
    </location>
</feature>
<feature type="strand" evidence="6">
    <location>
        <begin position="205"/>
        <end position="208"/>
    </location>
</feature>
<feature type="strand" evidence="6">
    <location>
        <begin position="215"/>
        <end position="218"/>
    </location>
</feature>
<feature type="turn" evidence="6">
    <location>
        <begin position="219"/>
        <end position="222"/>
    </location>
</feature>
<feature type="helix" evidence="6">
    <location>
        <begin position="226"/>
        <end position="241"/>
    </location>
</feature>
<feature type="strand" evidence="6">
    <location>
        <begin position="245"/>
        <end position="249"/>
    </location>
</feature>
<feature type="helix" evidence="6">
    <location>
        <begin position="262"/>
        <end position="283"/>
    </location>
</feature>
<feature type="strand" evidence="6">
    <location>
        <begin position="290"/>
        <end position="293"/>
    </location>
</feature>
<feature type="helix" evidence="6">
    <location>
        <begin position="310"/>
        <end position="328"/>
    </location>
</feature>
<feature type="helix" evidence="6">
    <location>
        <begin position="332"/>
        <end position="335"/>
    </location>
</feature>
<feature type="strand" evidence="6">
    <location>
        <begin position="339"/>
        <end position="342"/>
    </location>
</feature>
<feature type="helix" evidence="6">
    <location>
        <begin position="344"/>
        <end position="346"/>
    </location>
</feature>
<feature type="helix" evidence="6">
    <location>
        <begin position="348"/>
        <end position="354"/>
    </location>
</feature>
<feature type="strand" evidence="6">
    <location>
        <begin position="361"/>
        <end position="364"/>
    </location>
</feature>
<feature type="strand" evidence="6">
    <location>
        <begin position="366"/>
        <end position="372"/>
    </location>
</feature>
<feature type="helix" evidence="6">
    <location>
        <begin position="376"/>
        <end position="379"/>
    </location>
</feature>
<feature type="helix" evidence="6">
    <location>
        <begin position="393"/>
        <end position="395"/>
    </location>
</feature>
<feature type="strand" evidence="6">
    <location>
        <begin position="398"/>
        <end position="400"/>
    </location>
</feature>
<feature type="helix" evidence="6">
    <location>
        <begin position="406"/>
        <end position="414"/>
    </location>
</feature>
<feature type="helix" evidence="6">
    <location>
        <begin position="417"/>
        <end position="421"/>
    </location>
</feature>
<feature type="strand" evidence="6">
    <location>
        <begin position="426"/>
        <end position="431"/>
    </location>
</feature>
<feature type="helix" evidence="6">
    <location>
        <begin position="441"/>
        <end position="464"/>
    </location>
</feature>
<feature type="strand" evidence="6">
    <location>
        <begin position="468"/>
        <end position="471"/>
    </location>
</feature>
<feature type="turn" evidence="6">
    <location>
        <begin position="483"/>
        <end position="485"/>
    </location>
</feature>
<feature type="helix" evidence="6">
    <location>
        <begin position="491"/>
        <end position="502"/>
    </location>
</feature>
<reference key="1">
    <citation type="submission" date="2007-04" db="EMBL/GenBank/DDBJ databases">
        <title>Draft genome sequence of Bacteroides ovatus (ATCC 8483).</title>
        <authorList>
            <person name="Sudarsanam P."/>
            <person name="Ley R."/>
            <person name="Guruge J."/>
            <person name="Turnbaugh P.J."/>
            <person name="Mahowald M."/>
            <person name="Liep D."/>
            <person name="Gordon J."/>
        </authorList>
    </citation>
    <scope>NUCLEOTIDE SEQUENCE [LARGE SCALE GENOMIC DNA]</scope>
    <source>
        <strain>ATCC 8483 / DSM 1896 / JCM 5824 / BCRC 10623 / CCUG 4943 / NCTC 11153</strain>
    </source>
</reference>
<reference key="2">
    <citation type="journal article" date="2014" name="Nature">
        <title>A discrete genetic locus confers xyloglucan metabolism in select human gut Bacteroidetes.</title>
        <authorList>
            <person name="Larsbrink J."/>
            <person name="Rogers T.E."/>
            <person name="Hemsworth G.R."/>
            <person name="McKee L.S."/>
            <person name="Tauzin A.S."/>
            <person name="Spadiut O."/>
            <person name="Klinter S."/>
            <person name="Pudlo N.A."/>
            <person name="Urs K."/>
            <person name="Koropatkin N.M."/>
            <person name="Creagh A.L."/>
            <person name="Haynes C.A."/>
            <person name="Kelly A.G."/>
            <person name="Cederholm S.N."/>
            <person name="Davies G.J."/>
            <person name="Martens E.C."/>
            <person name="Brumer H."/>
        </authorList>
    </citation>
    <scope>X-RAY CRYSTALLOGRAPHY (1.43 ANGSTROMS) OF 37-502 IN COMPLEX WITH HEPTASACCHARIDE XXXG</scope>
    <scope>ACTIVE SITE</scope>
    <scope>FUNCTION</scope>
    <scope>CATALYTIC ACTIVITY</scope>
    <scope>BIOPHYSICOCHEMICAL PROPERTIES</scope>
    <scope>PATHWAY</scope>
    <scope>DISRUPTION PHENOTYPE</scope>
    <scope>PALMITOYLATION AT CYS-33</scope>
    <scope>MUTAGENESIS OF CYS-33 AND GLU-430</scope>
</reference>
<name>BGH5A_BACO1</name>
<accession>A7LXT7</accession>
<gene>
    <name type="ORF">BACOVA_02653</name>
</gene>
<organism>
    <name type="scientific">Bacteroides ovatus (strain ATCC 8483 / DSM 1896 / JCM 5824 / BCRC 10623 / CCUG 4943 / NCTC 11153)</name>
    <dbReference type="NCBI Taxonomy" id="411476"/>
    <lineage>
        <taxon>Bacteria</taxon>
        <taxon>Pseudomonadati</taxon>
        <taxon>Bacteroidota</taxon>
        <taxon>Bacteroidia</taxon>
        <taxon>Bacteroidales</taxon>
        <taxon>Bacteroidaceae</taxon>
        <taxon>Bacteroides</taxon>
    </lineage>
</organism>
<comment type="function">
    <text evidence="3">Catalyzes endohydrolysis of 1,4-beta-D-glucosidic linkages in xyloglucan with retention of the beta-configuration of the glycosyl residues in xyloglucan degradation. Cleaves the backbone of the 3 major types of natural xyloglucans (seed galactoxyloglucan from tamarind kernel, dicot fucogalactoxyloglucan from lettuce leaves, and solanaceous arabinogalactoxyloglucan from tomato fruit), to produce xyloglucan oligosaccharides.</text>
</comment>
<comment type="catalytic activity">
    <reaction evidence="3">
        <text>xyloglucan + H2O = xyloglucan oligosaccharides.</text>
        <dbReference type="EC" id="3.2.1.151"/>
    </reaction>
</comment>
<comment type="biophysicochemical properties">
    <kinetics>
        <KM evidence="3">0.036 mM for XXXG-beta-CNP</KM>
        <KM evidence="3">0.145 mM for XLLG-beta-CNP</KM>
        <KM evidence="3">3.59 mM for GGGG-beta-CNP</KM>
        <text>kcat is 10.5 sec(-1) for XXXG-beta-CNP. kcat is 11.1 sec(-1) for XLLG-beta-CNP. kcat is 0.12 sec(-1) for GGGG-beta-CNP.</text>
    </kinetics>
    <phDependence>
        <text evidence="3">Optimum pH is 6.0-7.0.</text>
    </phDependence>
</comment>
<comment type="pathway">
    <text evidence="3">Glucan metabolism; xyloglucan degradation.</text>
</comment>
<comment type="subcellular location">
    <subcellularLocation>
        <location evidence="4">Cell outer membrane</location>
        <topology evidence="4">Lipid-anchor</topology>
    </subcellularLocation>
    <text evidence="3">Cell outer membrane localization is predicted by analogy with the archetypal sus locus.</text>
</comment>
<comment type="domain">
    <text evidence="3">The BACON domain was initially thought to act as a carbohydrate-binding domain. However, it does not bind carbohydrates and may rather be required to distance the catalytic module from the cell surface and confer additional mobility to the catalytic domain for attack of the polysaccharide (PubMed:24463512).</text>
</comment>
<comment type="disruption phenotype">
    <text evidence="3">Cells are not able to growth on xyloglucan polysaccharide, This phenotype can be directly rescued by the addition of xyloglucan oligosaccharides.</text>
</comment>
<comment type="miscellaneous">
    <text evidence="5">Gut bacteria supply the human body with energy from dietary polysaccharides through glycosidases that are absent in the human genome. Xyloglucans are a ubiquitous family of highly branched plant cell wall polysaccharides present in the vegetables we consume. Enzymes involved in xyloglucan degradation mediate the conversion of otherwise indigestible plant polysaccharides to short-chain fatty acids (PubMed:24463512).</text>
</comment>
<comment type="similarity">
    <text evidence="4">Belongs to the glycosyl hydrolase 5 (cellulase A) family.</text>
</comment>
<proteinExistence type="evidence at protein level"/>
<sequence length="502" mass="55653">MEKQSFSDGLFSPLGIKRVIFMLVLLTTSFISCSNSDEKGGSLEVAQEYRNLEFDARGSRQTIQIDGPAEWHISTSESWCKSSHTIGEGKQYVNITVEANDTQKERTATVTVSASGAPDIIINVKQSLYSVPAYDEYIAPDNTGMRDLTSMQLSALMKAGVNVGNTFEAVIVGNDGSLSGDETCWGNPTPNKVLFEGIKAAGFDVVRIPVAYSHQFEDAATYKIKSAWMDKVEAAVKAALDAGLYVIINIHWEGGWLNHPVDANKEALDERLEAMWKQIALRFRDYDDRLLFAGTNEVNNDDANGAQPTEENYRVQNGFNQVFVNTVRATGGRNHYRHLIVQAYNTDVAKAVAHFTMPLDIVQNRIFLECHYYDPYDFTIMPNDENFKSQWGAAFAGGDVSATGQEGDIEATLSSLNVFINNNVPVIIGEYGPTLRDQLTGEALENHLKSRNDYIEYVVKTCVKNKLVPLYWDAGYTEKLFDRTTGQPHNAASIAAIMKGLN</sequence>
<dbReference type="EC" id="3.2.1.151"/>
<dbReference type="EMBL" id="AAXF02000049">
    <property type="protein sequence ID" value="EDO11444.1"/>
    <property type="molecule type" value="Genomic_DNA"/>
</dbReference>
<dbReference type="RefSeq" id="WP_004298445.1">
    <property type="nucleotide sequence ID" value="NZ_DS264579.1"/>
</dbReference>
<dbReference type="PDB" id="3ZMR">
    <property type="method" value="X-ray"/>
    <property type="resolution" value="1.43 A"/>
    <property type="chains" value="A/B=37-502"/>
</dbReference>
<dbReference type="PDBsum" id="3ZMR"/>
<dbReference type="SMR" id="A7LXT7"/>
<dbReference type="CAZy" id="GH5">
    <property type="family name" value="Glycoside Hydrolase Family 5"/>
</dbReference>
<dbReference type="eggNOG" id="COG2730">
    <property type="taxonomic scope" value="Bacteria"/>
</dbReference>
<dbReference type="HOGENOM" id="CLU_018668_3_0_10"/>
<dbReference type="SABIO-RK" id="A7LXT7"/>
<dbReference type="UniPathway" id="UPA01045"/>
<dbReference type="EvolutionaryTrace" id="A7LXT7"/>
<dbReference type="Proteomes" id="UP000005475">
    <property type="component" value="Unassembled WGS sequence"/>
</dbReference>
<dbReference type="GO" id="GO:0009279">
    <property type="term" value="C:cell outer membrane"/>
    <property type="evidence" value="ECO:0007669"/>
    <property type="project" value="UniProtKB-SubCell"/>
</dbReference>
<dbReference type="GO" id="GO:0009986">
    <property type="term" value="C:cell surface"/>
    <property type="evidence" value="ECO:0007669"/>
    <property type="project" value="TreeGrafter"/>
</dbReference>
<dbReference type="GO" id="GO:0005576">
    <property type="term" value="C:extracellular region"/>
    <property type="evidence" value="ECO:0007669"/>
    <property type="project" value="TreeGrafter"/>
</dbReference>
<dbReference type="GO" id="GO:0008422">
    <property type="term" value="F:beta-glucosidase activity"/>
    <property type="evidence" value="ECO:0007669"/>
    <property type="project" value="TreeGrafter"/>
</dbReference>
<dbReference type="GO" id="GO:0033946">
    <property type="term" value="F:xyloglucan-specific endo-beta-1,4-glucanase activity"/>
    <property type="evidence" value="ECO:0000314"/>
    <property type="project" value="UniProtKB"/>
</dbReference>
<dbReference type="GO" id="GO:0085030">
    <property type="term" value="P:symbiotic process benefiting host"/>
    <property type="evidence" value="ECO:0000314"/>
    <property type="project" value="UniProtKB"/>
</dbReference>
<dbReference type="GO" id="GO:2000899">
    <property type="term" value="P:xyloglucan catabolic process"/>
    <property type="evidence" value="ECO:0000314"/>
    <property type="project" value="UniProtKB"/>
</dbReference>
<dbReference type="CDD" id="cd14948">
    <property type="entry name" value="BACON"/>
    <property type="match status" value="1"/>
</dbReference>
<dbReference type="FunFam" id="3.20.20.80:FF:000318">
    <property type="entry name" value="Xyloglucan-specific endo-beta-1,4-glucanase BoGH5A"/>
    <property type="match status" value="1"/>
</dbReference>
<dbReference type="Gene3D" id="3.20.20.80">
    <property type="entry name" value="Glycosidases"/>
    <property type="match status" value="1"/>
</dbReference>
<dbReference type="Gene3D" id="2.60.40.10">
    <property type="entry name" value="Immunoglobulins"/>
    <property type="match status" value="1"/>
</dbReference>
<dbReference type="InterPro" id="IPR024361">
    <property type="entry name" value="BACON"/>
</dbReference>
<dbReference type="InterPro" id="IPR001547">
    <property type="entry name" value="Glyco_hydro_5"/>
</dbReference>
<dbReference type="InterPro" id="IPR017853">
    <property type="entry name" value="Glycoside_hydrolase_SF"/>
</dbReference>
<dbReference type="InterPro" id="IPR050386">
    <property type="entry name" value="Glycosyl_hydrolase_5"/>
</dbReference>
<dbReference type="InterPro" id="IPR013783">
    <property type="entry name" value="Ig-like_fold"/>
</dbReference>
<dbReference type="PANTHER" id="PTHR31297:SF17">
    <property type="entry name" value="ENDOGLUCANASE"/>
    <property type="match status" value="1"/>
</dbReference>
<dbReference type="PANTHER" id="PTHR31297">
    <property type="entry name" value="GLUCAN ENDO-1,6-BETA-GLUCOSIDASE B"/>
    <property type="match status" value="1"/>
</dbReference>
<dbReference type="Pfam" id="PF13004">
    <property type="entry name" value="BACON"/>
    <property type="match status" value="1"/>
</dbReference>
<dbReference type="Pfam" id="PF00150">
    <property type="entry name" value="Cellulase"/>
    <property type="match status" value="1"/>
</dbReference>
<dbReference type="SUPFAM" id="SSF51445">
    <property type="entry name" value="(Trans)glycosidases"/>
    <property type="match status" value="1"/>
</dbReference>
<dbReference type="PROSITE" id="PS51257">
    <property type="entry name" value="PROKAR_LIPOPROTEIN"/>
    <property type="match status" value="1"/>
</dbReference>